<evidence type="ECO:0000255" key="1">
    <source>
        <dbReference type="HAMAP-Rule" id="MF_00212"/>
    </source>
</evidence>
<accession>Q9HYF4</accession>
<organism>
    <name type="scientific">Pseudomonas aeruginosa (strain ATCC 15692 / DSM 22644 / CIP 104116 / JCM 14847 / LMG 12228 / 1C / PRS 101 / PAO1)</name>
    <dbReference type="NCBI Taxonomy" id="208964"/>
    <lineage>
        <taxon>Bacteria</taxon>
        <taxon>Pseudomonadati</taxon>
        <taxon>Pseudomonadota</taxon>
        <taxon>Gammaproteobacteria</taxon>
        <taxon>Pseudomonadales</taxon>
        <taxon>Pseudomonadaceae</taxon>
        <taxon>Pseudomonas</taxon>
    </lineage>
</organism>
<gene>
    <name evidence="1" type="primary">mqo1</name>
    <name type="synonym">mqoA</name>
    <name type="ordered locus">PA3452</name>
</gene>
<reference key="1">
    <citation type="journal article" date="2000" name="Nature">
        <title>Complete genome sequence of Pseudomonas aeruginosa PAO1, an opportunistic pathogen.</title>
        <authorList>
            <person name="Stover C.K."/>
            <person name="Pham X.-Q.T."/>
            <person name="Erwin A.L."/>
            <person name="Mizoguchi S.D."/>
            <person name="Warrener P."/>
            <person name="Hickey M.J."/>
            <person name="Brinkman F.S.L."/>
            <person name="Hufnagle W.O."/>
            <person name="Kowalik D.J."/>
            <person name="Lagrou M."/>
            <person name="Garber R.L."/>
            <person name="Goltry L."/>
            <person name="Tolentino E."/>
            <person name="Westbrock-Wadman S."/>
            <person name="Yuan Y."/>
            <person name="Brody L.L."/>
            <person name="Coulter S.N."/>
            <person name="Folger K.R."/>
            <person name="Kas A."/>
            <person name="Larbig K."/>
            <person name="Lim R.M."/>
            <person name="Smith K.A."/>
            <person name="Spencer D.H."/>
            <person name="Wong G.K.-S."/>
            <person name="Wu Z."/>
            <person name="Paulsen I.T."/>
            <person name="Reizer J."/>
            <person name="Saier M.H. Jr."/>
            <person name="Hancock R.E.W."/>
            <person name="Lory S."/>
            <person name="Olson M.V."/>
        </authorList>
    </citation>
    <scope>NUCLEOTIDE SEQUENCE [LARGE SCALE GENOMIC DNA]</scope>
    <source>
        <strain>ATCC 15692 / DSM 22644 / CIP 104116 / JCM 14847 / LMG 12228 / 1C / PRS 101 / PAO1</strain>
    </source>
</reference>
<name>MQO1_PSEAE</name>
<feature type="chain" id="PRO_0000128729" description="Probable malate:quinone oxidoreductase 1">
    <location>
        <begin position="1"/>
        <end position="523"/>
    </location>
</feature>
<comment type="catalytic activity">
    <reaction evidence="1">
        <text>(S)-malate + a quinone = a quinol + oxaloacetate</text>
        <dbReference type="Rhea" id="RHEA:46012"/>
        <dbReference type="ChEBI" id="CHEBI:15589"/>
        <dbReference type="ChEBI" id="CHEBI:16452"/>
        <dbReference type="ChEBI" id="CHEBI:24646"/>
        <dbReference type="ChEBI" id="CHEBI:132124"/>
        <dbReference type="EC" id="1.1.5.4"/>
    </reaction>
</comment>
<comment type="cofactor">
    <cofactor evidence="1">
        <name>FAD</name>
        <dbReference type="ChEBI" id="CHEBI:57692"/>
    </cofactor>
</comment>
<comment type="pathway">
    <text evidence="1">Carbohydrate metabolism; tricarboxylic acid cycle; oxaloacetate from (S)-malate (quinone route): step 1/1.</text>
</comment>
<comment type="similarity">
    <text evidence="1">Belongs to the MQO family.</text>
</comment>
<proteinExistence type="inferred from homology"/>
<sequence length="523" mass="57210">MKKILLMLLCVSVLGCSKNSVESEKPVDVLLIGGGIMSATLGTYLNELEPGWTIEMVERLDKVAEESSNGWNNAGTGHSAFCELNYTSEAADGSMDISKAVAINENFEISKQFWAYQVDRKVLNDPKSFINNVPHMSFVWGDDNVAFLKKRHAALQHSSLFRGMEYSEDPEQIKQWVPLVMEGREPGQKIAATRMSIGTDVNFGEITRQLVGSLSAKDTFKLRLQHEVRDLKRNDDNTWTVTMADLANGDKETSVKARFVFIGAGGGALKLLQMSGIPEAEGYAGFPVGGSFLATTNPDVVKRHLAKVYGKASVGSPPMSVPHLDTRMIDGKPVLLFGPFATFSTKFLKNGSLWDLPGSVTSGNIGPMFNAGIDNFDLSQYLIGQLMLSQDDRMASLREYFPEARDEDWKLVQAGQRVQIIKKDAEKGGVLQFGTEVVTAADGSVAALLGASPGASTAAPIMLSVLEKAFKDKVATPEWQARLKEIVPSYGRKLNNDIELTNSTRAWSSERLQLIHVPVQPEA</sequence>
<protein>
    <recommendedName>
        <fullName evidence="1">Probable malate:quinone oxidoreductase 1</fullName>
        <ecNumber evidence="1">1.1.5.4</ecNumber>
    </recommendedName>
    <alternativeName>
        <fullName evidence="1">MQO 1</fullName>
    </alternativeName>
    <alternativeName>
        <fullName evidence="1">Malate dehydrogenase [quinone] 1</fullName>
    </alternativeName>
</protein>
<dbReference type="EC" id="1.1.5.4" evidence="1"/>
<dbReference type="EMBL" id="AE004091">
    <property type="protein sequence ID" value="AAG06840.1"/>
    <property type="molecule type" value="Genomic_DNA"/>
</dbReference>
<dbReference type="PIR" id="C83213">
    <property type="entry name" value="C83213"/>
</dbReference>
<dbReference type="RefSeq" id="NP_252142.1">
    <property type="nucleotide sequence ID" value="NC_002516.2"/>
</dbReference>
<dbReference type="RefSeq" id="WP_003102300.1">
    <property type="nucleotide sequence ID" value="NZ_QZGE01000037.1"/>
</dbReference>
<dbReference type="SMR" id="Q9HYF4"/>
<dbReference type="FunCoup" id="Q9HYF4">
    <property type="interactions" value="194"/>
</dbReference>
<dbReference type="STRING" id="208964.PA3452"/>
<dbReference type="PaxDb" id="208964-PA3452"/>
<dbReference type="GeneID" id="879029"/>
<dbReference type="KEGG" id="pae:PA3452"/>
<dbReference type="PATRIC" id="fig|208964.12.peg.3614"/>
<dbReference type="PseudoCAP" id="PA3452"/>
<dbReference type="HOGENOM" id="CLU_028151_0_0_6"/>
<dbReference type="InParanoid" id="Q9HYF4"/>
<dbReference type="OrthoDB" id="9763983at2"/>
<dbReference type="PhylomeDB" id="Q9HYF4"/>
<dbReference type="BioCyc" id="PAER208964:G1FZ6-3520-MONOMER"/>
<dbReference type="UniPathway" id="UPA00223">
    <property type="reaction ID" value="UER01008"/>
</dbReference>
<dbReference type="Proteomes" id="UP000002438">
    <property type="component" value="Chromosome"/>
</dbReference>
<dbReference type="GO" id="GO:0005737">
    <property type="term" value="C:cytoplasm"/>
    <property type="evidence" value="ECO:0000318"/>
    <property type="project" value="GO_Central"/>
</dbReference>
<dbReference type="GO" id="GO:0008924">
    <property type="term" value="F:L-malate dehydrogenase (quinone) activity"/>
    <property type="evidence" value="ECO:0007669"/>
    <property type="project" value="UniProtKB-UniRule"/>
</dbReference>
<dbReference type="GO" id="GO:0006099">
    <property type="term" value="P:tricarboxylic acid cycle"/>
    <property type="evidence" value="ECO:0007669"/>
    <property type="project" value="UniProtKB-UniRule"/>
</dbReference>
<dbReference type="HAMAP" id="MF_00212">
    <property type="entry name" value="MQO"/>
    <property type="match status" value="1"/>
</dbReference>
<dbReference type="InterPro" id="IPR036188">
    <property type="entry name" value="FAD/NAD-bd_sf"/>
</dbReference>
<dbReference type="InterPro" id="IPR006231">
    <property type="entry name" value="MQO"/>
</dbReference>
<dbReference type="NCBIfam" id="TIGR01320">
    <property type="entry name" value="mal_quin_oxido"/>
    <property type="match status" value="1"/>
</dbReference>
<dbReference type="NCBIfam" id="NF003603">
    <property type="entry name" value="PRK05257.1-1"/>
    <property type="match status" value="1"/>
</dbReference>
<dbReference type="NCBIfam" id="NF003605">
    <property type="entry name" value="PRK05257.1-4"/>
    <property type="match status" value="1"/>
</dbReference>
<dbReference type="NCBIfam" id="NF003606">
    <property type="entry name" value="PRK05257.2-1"/>
    <property type="match status" value="1"/>
</dbReference>
<dbReference type="NCBIfam" id="NF003608">
    <property type="entry name" value="PRK05257.2-4"/>
    <property type="match status" value="1"/>
</dbReference>
<dbReference type="NCBIfam" id="NF003609">
    <property type="entry name" value="PRK05257.2-5"/>
    <property type="match status" value="1"/>
</dbReference>
<dbReference type="NCBIfam" id="NF003611">
    <property type="entry name" value="PRK05257.3-2"/>
    <property type="match status" value="1"/>
</dbReference>
<dbReference type="NCBIfam" id="NF003612">
    <property type="entry name" value="PRK05257.3-3"/>
    <property type="match status" value="1"/>
</dbReference>
<dbReference type="NCBIfam" id="NF003613">
    <property type="entry name" value="PRK05257.3-4"/>
    <property type="match status" value="1"/>
</dbReference>
<dbReference type="NCBIfam" id="NF009875">
    <property type="entry name" value="PRK13339.1"/>
    <property type="match status" value="1"/>
</dbReference>
<dbReference type="PANTHER" id="PTHR43104">
    <property type="entry name" value="L-2-HYDROXYGLUTARATE DEHYDROGENASE, MITOCHONDRIAL"/>
    <property type="match status" value="1"/>
</dbReference>
<dbReference type="PANTHER" id="PTHR43104:SF2">
    <property type="entry name" value="L-2-HYDROXYGLUTARATE DEHYDROGENASE, MITOCHONDRIAL"/>
    <property type="match status" value="1"/>
</dbReference>
<dbReference type="Pfam" id="PF06039">
    <property type="entry name" value="Mqo"/>
    <property type="match status" value="1"/>
</dbReference>
<dbReference type="SUPFAM" id="SSF51905">
    <property type="entry name" value="FAD/NAD(P)-binding domain"/>
    <property type="match status" value="1"/>
</dbReference>
<keyword id="KW-0274">FAD</keyword>
<keyword id="KW-0285">Flavoprotein</keyword>
<keyword id="KW-0560">Oxidoreductase</keyword>
<keyword id="KW-1185">Reference proteome</keyword>
<keyword id="KW-0816">Tricarboxylic acid cycle</keyword>